<reference key="1">
    <citation type="submission" date="2006-10" db="EMBL/GenBank/DDBJ databases">
        <authorList>
            <person name="Fleischmann R.D."/>
            <person name="Dodson R.J."/>
            <person name="Haft D.H."/>
            <person name="Merkel J.S."/>
            <person name="Nelson W.C."/>
            <person name="Fraser C.M."/>
        </authorList>
    </citation>
    <scope>NUCLEOTIDE SEQUENCE [LARGE SCALE GENOMIC DNA]</scope>
    <source>
        <strain>ATCC 700084 / mc(2)155</strain>
    </source>
</reference>
<reference key="2">
    <citation type="journal article" date="2007" name="Genome Biol.">
        <title>Interrupted coding sequences in Mycobacterium smegmatis: authentic mutations or sequencing errors?</title>
        <authorList>
            <person name="Deshayes C."/>
            <person name="Perrodou E."/>
            <person name="Gallien S."/>
            <person name="Euphrasie D."/>
            <person name="Schaeffer C."/>
            <person name="Van-Dorsselaer A."/>
            <person name="Poch O."/>
            <person name="Lecompte O."/>
            <person name="Reyrat J.-M."/>
        </authorList>
    </citation>
    <scope>NUCLEOTIDE SEQUENCE [LARGE SCALE GENOMIC DNA]</scope>
    <source>
        <strain>ATCC 700084 / mc(2)155</strain>
    </source>
</reference>
<reference key="3">
    <citation type="journal article" date="2009" name="Genome Res.">
        <title>Ortho-proteogenomics: multiple proteomes investigation through orthology and a new MS-based protocol.</title>
        <authorList>
            <person name="Gallien S."/>
            <person name="Perrodou E."/>
            <person name="Carapito C."/>
            <person name="Deshayes C."/>
            <person name="Reyrat J.-M."/>
            <person name="Van Dorsselaer A."/>
            <person name="Poch O."/>
            <person name="Schaeffer C."/>
            <person name="Lecompte O."/>
        </authorList>
    </citation>
    <scope>NUCLEOTIDE SEQUENCE [LARGE SCALE GENOMIC DNA]</scope>
    <source>
        <strain>ATCC 700084 / mc(2)155</strain>
    </source>
</reference>
<reference key="4">
    <citation type="journal article" date="2010" name="Microbiology">
        <title>Role of an RNA polymerase interacting protein, MsRbpA, from Mycobacterium smegmatis in phenotypic tolerance to rifampicin.</title>
        <authorList>
            <person name="Dey A."/>
            <person name="Verma A.K."/>
            <person name="Chatterji D."/>
        </authorList>
    </citation>
    <scope>FUNCTION</scope>
    <scope>SUBUNIT</scope>
    <source>
        <strain>ATCC 700084 / mc(2)155</strain>
    </source>
</reference>
<feature type="chain" id="PRO_1000005960" description="DNA-directed RNA polymerase subunit omega">
    <location>
        <begin position="1"/>
        <end position="107"/>
    </location>
</feature>
<feature type="helix" evidence="3">
    <location>
        <begin position="31"/>
        <end position="33"/>
    </location>
</feature>
<feature type="helix" evidence="3">
    <location>
        <begin position="37"/>
        <end position="41"/>
    </location>
</feature>
<feature type="strand" evidence="3">
    <location>
        <begin position="44"/>
        <end position="46"/>
    </location>
</feature>
<feature type="helix" evidence="3">
    <location>
        <begin position="47"/>
        <end position="64"/>
    </location>
</feature>
<feature type="strand" evidence="4">
    <location>
        <begin position="69"/>
        <end position="72"/>
    </location>
</feature>
<feature type="helix" evidence="3">
    <location>
        <begin position="88"/>
        <end position="97"/>
    </location>
</feature>
<feature type="strand" evidence="3">
    <location>
        <begin position="101"/>
        <end position="104"/>
    </location>
</feature>
<accession>A0QWT1</accession>
<accession>I7G8B1</accession>
<evidence type="ECO:0000255" key="1">
    <source>
        <dbReference type="HAMAP-Rule" id="MF_00366"/>
    </source>
</evidence>
<evidence type="ECO:0000269" key="2">
    <source>
    </source>
</evidence>
<evidence type="ECO:0007829" key="3">
    <source>
        <dbReference type="PDB" id="5TW1"/>
    </source>
</evidence>
<evidence type="ECO:0007829" key="4">
    <source>
        <dbReference type="PDB" id="6VVT"/>
    </source>
</evidence>
<sequence length="107" mass="11535">MSTPHADAQLNAADDLGIDSSAASAYDTPLGITNPPIDELLSRASSKYALVIYAAKRARQINDYYNQLGDGILEYVGPLVEPGLQEKPLSIALREIHGDLLEHTEGE</sequence>
<comment type="function">
    <text evidence="1 2">Promotes RNA polymerase assembly. Latches the N- and C-terminal regions of the beta' subunit thereby facilitating its interaction with the beta and alpha subunits.</text>
</comment>
<comment type="catalytic activity">
    <reaction evidence="1">
        <text>RNA(n) + a ribonucleoside 5'-triphosphate = RNA(n+1) + diphosphate</text>
        <dbReference type="Rhea" id="RHEA:21248"/>
        <dbReference type="Rhea" id="RHEA-COMP:14527"/>
        <dbReference type="Rhea" id="RHEA-COMP:17342"/>
        <dbReference type="ChEBI" id="CHEBI:33019"/>
        <dbReference type="ChEBI" id="CHEBI:61557"/>
        <dbReference type="ChEBI" id="CHEBI:140395"/>
        <dbReference type="EC" id="2.7.7.6"/>
    </reaction>
</comment>
<comment type="subunit">
    <text evidence="1 2">The RNAP catalytic core consists of 2 alpha, 1 beta, 1 beta' and 1 omega subunit. When a sigma factor is associated with the core the holoenzyme is formed, which can initiate transcription.</text>
</comment>
<comment type="similarity">
    <text evidence="1">Belongs to the RNA polymerase subunit omega family.</text>
</comment>
<dbReference type="EC" id="2.7.7.6" evidence="1"/>
<dbReference type="EMBL" id="CP000480">
    <property type="protein sequence ID" value="ABK69545.1"/>
    <property type="molecule type" value="Genomic_DNA"/>
</dbReference>
<dbReference type="EMBL" id="CP001663">
    <property type="protein sequence ID" value="AFP39441.1"/>
    <property type="molecule type" value="Genomic_DNA"/>
</dbReference>
<dbReference type="RefSeq" id="WP_011728783.1">
    <property type="nucleotide sequence ID" value="NZ_SIJM01000002.1"/>
</dbReference>
<dbReference type="RefSeq" id="YP_887369.1">
    <property type="nucleotide sequence ID" value="NC_008596.1"/>
</dbReference>
<dbReference type="PDB" id="5TW1">
    <property type="method" value="X-ray"/>
    <property type="resolution" value="2.76 A"/>
    <property type="chains" value="E=1-107"/>
</dbReference>
<dbReference type="PDB" id="5VI5">
    <property type="method" value="X-ray"/>
    <property type="resolution" value="3.20 A"/>
    <property type="chains" value="E=1-107"/>
</dbReference>
<dbReference type="PDB" id="5VI8">
    <property type="method" value="X-ray"/>
    <property type="resolution" value="2.76 A"/>
    <property type="chains" value="E=1-107"/>
</dbReference>
<dbReference type="PDB" id="6CCE">
    <property type="method" value="X-ray"/>
    <property type="resolution" value="3.05 A"/>
    <property type="chains" value="E=1-107"/>
</dbReference>
<dbReference type="PDB" id="6CCV">
    <property type="method" value="X-ray"/>
    <property type="resolution" value="3.05 A"/>
    <property type="chains" value="E=1-107"/>
</dbReference>
<dbReference type="PDB" id="6DCF">
    <property type="method" value="X-ray"/>
    <property type="resolution" value="3.45 A"/>
    <property type="chains" value="E=1-107"/>
</dbReference>
<dbReference type="PDB" id="6EYD">
    <property type="method" value="EM"/>
    <property type="resolution" value="4.20 A"/>
    <property type="chains" value="E=2-107"/>
</dbReference>
<dbReference type="PDB" id="6F6W">
    <property type="method" value="EM"/>
    <property type="resolution" value="3.80 A"/>
    <property type="chains" value="E=2-107"/>
</dbReference>
<dbReference type="PDB" id="6VVS">
    <property type="method" value="X-ray"/>
    <property type="resolution" value="3.11 A"/>
    <property type="chains" value="E=1-107"/>
</dbReference>
<dbReference type="PDB" id="6VVT">
    <property type="method" value="X-ray"/>
    <property type="resolution" value="2.90 A"/>
    <property type="chains" value="E=1-107"/>
</dbReference>
<dbReference type="PDB" id="6VVV">
    <property type="method" value="X-ray"/>
    <property type="resolution" value="3.20 A"/>
    <property type="chains" value="E=1-107"/>
</dbReference>
<dbReference type="PDB" id="6YXU">
    <property type="method" value="EM"/>
    <property type="resolution" value="3.08 A"/>
    <property type="chains" value="E=1-107"/>
</dbReference>
<dbReference type="PDB" id="6YYS">
    <property type="method" value="EM"/>
    <property type="resolution" value="3.08 A"/>
    <property type="chains" value="E=1-107"/>
</dbReference>
<dbReference type="PDB" id="6Z11">
    <property type="method" value="EM"/>
    <property type="resolution" value="3.36 A"/>
    <property type="chains" value="E=1-107"/>
</dbReference>
<dbReference type="PDB" id="7P5X">
    <property type="method" value="EM"/>
    <property type="resolution" value="3.20 A"/>
    <property type="chains" value="AE=1-107"/>
</dbReference>
<dbReference type="PDB" id="8Q3I">
    <property type="method" value="EM"/>
    <property type="resolution" value="3.11 A"/>
    <property type="chains" value="E=1-107"/>
</dbReference>
<dbReference type="PDB" id="8QN8">
    <property type="method" value="EM"/>
    <property type="resolution" value="3.14 A"/>
    <property type="chains" value="E=1-107"/>
</dbReference>
<dbReference type="PDB" id="8QTI">
    <property type="method" value="EM"/>
    <property type="resolution" value="3.09 A"/>
    <property type="chains" value="E=1-107"/>
</dbReference>
<dbReference type="PDB" id="8QU6">
    <property type="method" value="EM"/>
    <property type="resolution" value="3.45 A"/>
    <property type="chains" value="E=1-107"/>
</dbReference>
<dbReference type="PDB" id="8R2M">
    <property type="method" value="EM"/>
    <property type="resolution" value="3.44 A"/>
    <property type="chains" value="E=1-107"/>
</dbReference>
<dbReference type="PDB" id="8R3M">
    <property type="method" value="EM"/>
    <property type="resolution" value="3.49 A"/>
    <property type="chains" value="E=1-107"/>
</dbReference>
<dbReference type="PDB" id="8R6P">
    <property type="method" value="EM"/>
    <property type="resolution" value="3.16 A"/>
    <property type="chains" value="E=1-107"/>
</dbReference>
<dbReference type="PDB" id="8R6R">
    <property type="method" value="EM"/>
    <property type="resolution" value="3.89 A"/>
    <property type="chains" value="E=1-107"/>
</dbReference>
<dbReference type="PDB" id="9FNE">
    <property type="method" value="EM"/>
    <property type="resolution" value="4.00 A"/>
    <property type="chains" value="E=1-107"/>
</dbReference>
<dbReference type="PDBsum" id="5TW1"/>
<dbReference type="PDBsum" id="5VI5"/>
<dbReference type="PDBsum" id="5VI8"/>
<dbReference type="PDBsum" id="6CCE"/>
<dbReference type="PDBsum" id="6CCV"/>
<dbReference type="PDBsum" id="6DCF"/>
<dbReference type="PDBsum" id="6EYD"/>
<dbReference type="PDBsum" id="6F6W"/>
<dbReference type="PDBsum" id="6VVS"/>
<dbReference type="PDBsum" id="6VVT"/>
<dbReference type="PDBsum" id="6VVV"/>
<dbReference type="PDBsum" id="6YXU"/>
<dbReference type="PDBsum" id="6YYS"/>
<dbReference type="PDBsum" id="6Z11"/>
<dbReference type="PDBsum" id="7P5X"/>
<dbReference type="PDBsum" id="8Q3I"/>
<dbReference type="PDBsum" id="8QN8"/>
<dbReference type="PDBsum" id="8QTI"/>
<dbReference type="PDBsum" id="8QU6"/>
<dbReference type="PDBsum" id="8R2M"/>
<dbReference type="PDBsum" id="8R3M"/>
<dbReference type="PDBsum" id="8R6P"/>
<dbReference type="PDBsum" id="8R6R"/>
<dbReference type="PDBsum" id="9FNE"/>
<dbReference type="EMDB" id="EMD-10996"/>
<dbReference type="EMDB" id="EMD-11004"/>
<dbReference type="EMDB" id="EMD-11026"/>
<dbReference type="EMDB" id="EMD-13205"/>
<dbReference type="EMDB" id="EMD-18128"/>
<dbReference type="EMDB" id="EMD-18511"/>
<dbReference type="EMDB" id="EMD-18650"/>
<dbReference type="EMDB" id="EMD-18656"/>
<dbReference type="EMDB" id="EMD-18851"/>
<dbReference type="EMDB" id="EMD-18873"/>
<dbReference type="EMDB" id="EMD-18956"/>
<dbReference type="EMDB" id="EMD-18959"/>
<dbReference type="EMDB" id="EMD-3983"/>
<dbReference type="EMDB" id="EMD-4192"/>
<dbReference type="EMDB" id="EMD-50589"/>
<dbReference type="EMDB" id="EMD-50591"/>
<dbReference type="SMR" id="A0QWT1"/>
<dbReference type="IntAct" id="A0QWT1">
    <property type="interactions" value="1"/>
</dbReference>
<dbReference type="STRING" id="246196.MSMEG_3053"/>
<dbReference type="PaxDb" id="246196-MSMEI_2977"/>
<dbReference type="GeneID" id="93457830"/>
<dbReference type="KEGG" id="msb:LJ00_15190"/>
<dbReference type="KEGG" id="msg:MSMEI_2977"/>
<dbReference type="KEGG" id="msm:MSMEG_3053"/>
<dbReference type="PATRIC" id="fig|246196.19.peg.3014"/>
<dbReference type="eggNOG" id="COG1758">
    <property type="taxonomic scope" value="Bacteria"/>
</dbReference>
<dbReference type="OrthoDB" id="8481372at2"/>
<dbReference type="BRENDA" id="2.7.7.6">
    <property type="organism ID" value="3512"/>
</dbReference>
<dbReference type="Proteomes" id="UP000000757">
    <property type="component" value="Chromosome"/>
</dbReference>
<dbReference type="Proteomes" id="UP000006158">
    <property type="component" value="Chromosome"/>
</dbReference>
<dbReference type="GO" id="GO:0000428">
    <property type="term" value="C:DNA-directed RNA polymerase complex"/>
    <property type="evidence" value="ECO:0007669"/>
    <property type="project" value="UniProtKB-KW"/>
</dbReference>
<dbReference type="GO" id="GO:0003677">
    <property type="term" value="F:DNA binding"/>
    <property type="evidence" value="ECO:0007669"/>
    <property type="project" value="UniProtKB-UniRule"/>
</dbReference>
<dbReference type="GO" id="GO:0003899">
    <property type="term" value="F:DNA-directed RNA polymerase activity"/>
    <property type="evidence" value="ECO:0007669"/>
    <property type="project" value="UniProtKB-UniRule"/>
</dbReference>
<dbReference type="GO" id="GO:0006351">
    <property type="term" value="P:DNA-templated transcription"/>
    <property type="evidence" value="ECO:0007669"/>
    <property type="project" value="UniProtKB-UniRule"/>
</dbReference>
<dbReference type="FunFam" id="3.90.940.10:FF:000002">
    <property type="entry name" value="DNA-directed RNA polymerase subunit omega"/>
    <property type="match status" value="1"/>
</dbReference>
<dbReference type="Gene3D" id="3.90.940.10">
    <property type="match status" value="1"/>
</dbReference>
<dbReference type="HAMAP" id="MF_00366">
    <property type="entry name" value="RNApol_bact_RpoZ"/>
    <property type="match status" value="1"/>
</dbReference>
<dbReference type="InterPro" id="IPR003716">
    <property type="entry name" value="DNA-dir_RNA_pol_omega"/>
</dbReference>
<dbReference type="InterPro" id="IPR006110">
    <property type="entry name" value="Pol_omega/Rpo6/RPB6"/>
</dbReference>
<dbReference type="InterPro" id="IPR036161">
    <property type="entry name" value="RPB6/omega-like_sf"/>
</dbReference>
<dbReference type="NCBIfam" id="TIGR00690">
    <property type="entry name" value="rpoZ"/>
    <property type="match status" value="1"/>
</dbReference>
<dbReference type="PANTHER" id="PTHR34476">
    <property type="entry name" value="DNA-DIRECTED RNA POLYMERASE SUBUNIT OMEGA"/>
    <property type="match status" value="1"/>
</dbReference>
<dbReference type="PANTHER" id="PTHR34476:SF1">
    <property type="entry name" value="DNA-DIRECTED RNA POLYMERASE SUBUNIT OMEGA"/>
    <property type="match status" value="1"/>
</dbReference>
<dbReference type="Pfam" id="PF01192">
    <property type="entry name" value="RNA_pol_Rpb6"/>
    <property type="match status" value="1"/>
</dbReference>
<dbReference type="SMART" id="SM01409">
    <property type="entry name" value="RNA_pol_Rpb6"/>
    <property type="match status" value="1"/>
</dbReference>
<dbReference type="SUPFAM" id="SSF63562">
    <property type="entry name" value="RPB6/omega subunit-like"/>
    <property type="match status" value="1"/>
</dbReference>
<name>RPOZ_MYCS2</name>
<keyword id="KW-0002">3D-structure</keyword>
<keyword id="KW-0240">DNA-directed RNA polymerase</keyword>
<keyword id="KW-0548">Nucleotidyltransferase</keyword>
<keyword id="KW-1185">Reference proteome</keyword>
<keyword id="KW-0804">Transcription</keyword>
<keyword id="KW-0808">Transferase</keyword>
<proteinExistence type="evidence at protein level"/>
<organism>
    <name type="scientific">Mycolicibacterium smegmatis (strain ATCC 700084 / mc(2)155)</name>
    <name type="common">Mycobacterium smegmatis</name>
    <dbReference type="NCBI Taxonomy" id="246196"/>
    <lineage>
        <taxon>Bacteria</taxon>
        <taxon>Bacillati</taxon>
        <taxon>Actinomycetota</taxon>
        <taxon>Actinomycetes</taxon>
        <taxon>Mycobacteriales</taxon>
        <taxon>Mycobacteriaceae</taxon>
        <taxon>Mycolicibacterium</taxon>
    </lineage>
</organism>
<gene>
    <name evidence="1" type="primary">rpoZ</name>
    <name type="ordered locus">MSMEG_3053</name>
    <name type="ordered locus">MSMEI_2977</name>
</gene>
<protein>
    <recommendedName>
        <fullName evidence="1">DNA-directed RNA polymerase subunit omega</fullName>
        <shortName evidence="1">RNAP omega subunit</shortName>
        <ecNumber evidence="1">2.7.7.6</ecNumber>
    </recommendedName>
    <alternativeName>
        <fullName evidence="1">RNA polymerase omega subunit</fullName>
    </alternativeName>
    <alternativeName>
        <fullName evidence="1">Transcriptase subunit omega</fullName>
    </alternativeName>
</protein>